<gene>
    <name evidence="1" type="primary">serC</name>
    <name type="ordered locus">ABBFA_000864</name>
</gene>
<comment type="function">
    <text evidence="1">Catalyzes the reversible conversion of 3-phosphohydroxypyruvate to phosphoserine and of 3-hydroxy-2-oxo-4-phosphonooxybutanoate to phosphohydroxythreonine.</text>
</comment>
<comment type="catalytic activity">
    <reaction evidence="1">
        <text>O-phospho-L-serine + 2-oxoglutarate = 3-phosphooxypyruvate + L-glutamate</text>
        <dbReference type="Rhea" id="RHEA:14329"/>
        <dbReference type="ChEBI" id="CHEBI:16810"/>
        <dbReference type="ChEBI" id="CHEBI:18110"/>
        <dbReference type="ChEBI" id="CHEBI:29985"/>
        <dbReference type="ChEBI" id="CHEBI:57524"/>
        <dbReference type="EC" id="2.6.1.52"/>
    </reaction>
</comment>
<comment type="catalytic activity">
    <reaction evidence="1">
        <text>4-(phosphooxy)-L-threonine + 2-oxoglutarate = (R)-3-hydroxy-2-oxo-4-phosphooxybutanoate + L-glutamate</text>
        <dbReference type="Rhea" id="RHEA:16573"/>
        <dbReference type="ChEBI" id="CHEBI:16810"/>
        <dbReference type="ChEBI" id="CHEBI:29985"/>
        <dbReference type="ChEBI" id="CHEBI:58452"/>
        <dbReference type="ChEBI" id="CHEBI:58538"/>
        <dbReference type="EC" id="2.6.1.52"/>
    </reaction>
</comment>
<comment type="cofactor">
    <cofactor evidence="1">
        <name>pyridoxal 5'-phosphate</name>
        <dbReference type="ChEBI" id="CHEBI:597326"/>
    </cofactor>
    <text evidence="1">Binds 1 pyridoxal phosphate per subunit.</text>
</comment>
<comment type="pathway">
    <text evidence="1">Amino-acid biosynthesis; L-serine biosynthesis; L-serine from 3-phospho-D-glycerate: step 2/3.</text>
</comment>
<comment type="pathway">
    <text evidence="1">Cofactor biosynthesis; pyridoxine 5'-phosphate biosynthesis; pyridoxine 5'-phosphate from D-erythrose 4-phosphate: step 3/5.</text>
</comment>
<comment type="subunit">
    <text evidence="1">Homodimer.</text>
</comment>
<comment type="subcellular location">
    <subcellularLocation>
        <location evidence="1">Cytoplasm</location>
    </subcellularLocation>
</comment>
<comment type="similarity">
    <text evidence="1">Belongs to the class-V pyridoxal-phosphate-dependent aminotransferase family. SerC subfamily.</text>
</comment>
<dbReference type="EC" id="2.6.1.52" evidence="1"/>
<dbReference type="EMBL" id="CP001172">
    <property type="protein sequence ID" value="ACJ57841.1"/>
    <property type="molecule type" value="Genomic_DNA"/>
</dbReference>
<dbReference type="RefSeq" id="WP_001203181.1">
    <property type="nucleotide sequence ID" value="NZ_CP001172.1"/>
</dbReference>
<dbReference type="SMR" id="B7GY87"/>
<dbReference type="GeneID" id="92894890"/>
<dbReference type="HOGENOM" id="CLU_034866_0_2_6"/>
<dbReference type="UniPathway" id="UPA00135">
    <property type="reaction ID" value="UER00197"/>
</dbReference>
<dbReference type="UniPathway" id="UPA00244">
    <property type="reaction ID" value="UER00311"/>
</dbReference>
<dbReference type="Proteomes" id="UP000006924">
    <property type="component" value="Chromosome"/>
</dbReference>
<dbReference type="GO" id="GO:0005737">
    <property type="term" value="C:cytoplasm"/>
    <property type="evidence" value="ECO:0007669"/>
    <property type="project" value="UniProtKB-SubCell"/>
</dbReference>
<dbReference type="GO" id="GO:0004648">
    <property type="term" value="F:O-phospho-L-serine:2-oxoglutarate aminotransferase activity"/>
    <property type="evidence" value="ECO:0007669"/>
    <property type="project" value="UniProtKB-UniRule"/>
</dbReference>
<dbReference type="GO" id="GO:0030170">
    <property type="term" value="F:pyridoxal phosphate binding"/>
    <property type="evidence" value="ECO:0007669"/>
    <property type="project" value="UniProtKB-UniRule"/>
</dbReference>
<dbReference type="GO" id="GO:0006564">
    <property type="term" value="P:L-serine biosynthetic process"/>
    <property type="evidence" value="ECO:0007669"/>
    <property type="project" value="UniProtKB-UniRule"/>
</dbReference>
<dbReference type="GO" id="GO:0008615">
    <property type="term" value="P:pyridoxine biosynthetic process"/>
    <property type="evidence" value="ECO:0007669"/>
    <property type="project" value="UniProtKB-UniRule"/>
</dbReference>
<dbReference type="CDD" id="cd00611">
    <property type="entry name" value="PSAT_like"/>
    <property type="match status" value="1"/>
</dbReference>
<dbReference type="FunFam" id="3.40.640.10:FF:000010">
    <property type="entry name" value="Phosphoserine aminotransferase"/>
    <property type="match status" value="1"/>
</dbReference>
<dbReference type="FunFam" id="3.90.1150.10:FF:000006">
    <property type="entry name" value="Phosphoserine aminotransferase"/>
    <property type="match status" value="1"/>
</dbReference>
<dbReference type="Gene3D" id="3.90.1150.10">
    <property type="entry name" value="Aspartate Aminotransferase, domain 1"/>
    <property type="match status" value="1"/>
</dbReference>
<dbReference type="Gene3D" id="3.40.640.10">
    <property type="entry name" value="Type I PLP-dependent aspartate aminotransferase-like (Major domain)"/>
    <property type="match status" value="1"/>
</dbReference>
<dbReference type="HAMAP" id="MF_00160">
    <property type="entry name" value="SerC_aminotrans_5"/>
    <property type="match status" value="1"/>
</dbReference>
<dbReference type="InterPro" id="IPR000192">
    <property type="entry name" value="Aminotrans_V_dom"/>
</dbReference>
<dbReference type="InterPro" id="IPR020578">
    <property type="entry name" value="Aminotrans_V_PyrdxlP_BS"/>
</dbReference>
<dbReference type="InterPro" id="IPR022278">
    <property type="entry name" value="Pser_aminoTfrase"/>
</dbReference>
<dbReference type="InterPro" id="IPR015424">
    <property type="entry name" value="PyrdxlP-dep_Trfase"/>
</dbReference>
<dbReference type="InterPro" id="IPR015421">
    <property type="entry name" value="PyrdxlP-dep_Trfase_major"/>
</dbReference>
<dbReference type="InterPro" id="IPR015422">
    <property type="entry name" value="PyrdxlP-dep_Trfase_small"/>
</dbReference>
<dbReference type="NCBIfam" id="NF003764">
    <property type="entry name" value="PRK05355.1"/>
    <property type="match status" value="1"/>
</dbReference>
<dbReference type="NCBIfam" id="TIGR01364">
    <property type="entry name" value="serC_1"/>
    <property type="match status" value="1"/>
</dbReference>
<dbReference type="PANTHER" id="PTHR43247">
    <property type="entry name" value="PHOSPHOSERINE AMINOTRANSFERASE"/>
    <property type="match status" value="1"/>
</dbReference>
<dbReference type="PANTHER" id="PTHR43247:SF1">
    <property type="entry name" value="PHOSPHOSERINE AMINOTRANSFERASE"/>
    <property type="match status" value="1"/>
</dbReference>
<dbReference type="Pfam" id="PF00266">
    <property type="entry name" value="Aminotran_5"/>
    <property type="match status" value="1"/>
</dbReference>
<dbReference type="PIRSF" id="PIRSF000525">
    <property type="entry name" value="SerC"/>
    <property type="match status" value="1"/>
</dbReference>
<dbReference type="SUPFAM" id="SSF53383">
    <property type="entry name" value="PLP-dependent transferases"/>
    <property type="match status" value="1"/>
</dbReference>
<dbReference type="PROSITE" id="PS00595">
    <property type="entry name" value="AA_TRANSFER_CLASS_5"/>
    <property type="match status" value="1"/>
</dbReference>
<reference key="1">
    <citation type="journal article" date="2008" name="J. Bacteriol.">
        <title>Comparative genome sequence analysis of multidrug-resistant Acinetobacter baumannii.</title>
        <authorList>
            <person name="Adams M.D."/>
            <person name="Goglin K."/>
            <person name="Molyneaux N."/>
            <person name="Hujer K.M."/>
            <person name="Lavender H."/>
            <person name="Jamison J.J."/>
            <person name="MacDonald I.J."/>
            <person name="Martin K.M."/>
            <person name="Russo T."/>
            <person name="Campagnari A.A."/>
            <person name="Hujer A.M."/>
            <person name="Bonomo R.A."/>
            <person name="Gill S.R."/>
        </authorList>
    </citation>
    <scope>NUCLEOTIDE SEQUENCE [LARGE SCALE GENOMIC DNA]</scope>
    <source>
        <strain>AB307-0294</strain>
    </source>
</reference>
<proteinExistence type="inferred from homology"/>
<protein>
    <recommendedName>
        <fullName evidence="1">Phosphoserine aminotransferase</fullName>
        <ecNumber evidence="1">2.6.1.52</ecNumber>
    </recommendedName>
    <alternativeName>
        <fullName evidence="1">Phosphohydroxythreonine aminotransferase</fullName>
        <shortName evidence="1">PSAT</shortName>
    </alternativeName>
</protein>
<feature type="chain" id="PRO_1000118176" description="Phosphoserine aminotransferase">
    <location>
        <begin position="1"/>
        <end position="359"/>
    </location>
</feature>
<feature type="binding site" evidence="1">
    <location>
        <position position="41"/>
    </location>
    <ligand>
        <name>L-glutamate</name>
        <dbReference type="ChEBI" id="CHEBI:29985"/>
    </ligand>
</feature>
<feature type="binding site" evidence="1">
    <location>
        <begin position="75"/>
        <end position="76"/>
    </location>
    <ligand>
        <name>pyridoxal 5'-phosphate</name>
        <dbReference type="ChEBI" id="CHEBI:597326"/>
    </ligand>
</feature>
<feature type="binding site" evidence="1">
    <location>
        <position position="101"/>
    </location>
    <ligand>
        <name>pyridoxal 5'-phosphate</name>
        <dbReference type="ChEBI" id="CHEBI:597326"/>
    </ligand>
</feature>
<feature type="binding site" evidence="1">
    <location>
        <position position="152"/>
    </location>
    <ligand>
        <name>pyridoxal 5'-phosphate</name>
        <dbReference type="ChEBI" id="CHEBI:597326"/>
    </ligand>
</feature>
<feature type="binding site" evidence="1">
    <location>
        <position position="171"/>
    </location>
    <ligand>
        <name>pyridoxal 5'-phosphate</name>
        <dbReference type="ChEBI" id="CHEBI:597326"/>
    </ligand>
</feature>
<feature type="binding site" evidence="1">
    <location>
        <position position="194"/>
    </location>
    <ligand>
        <name>pyridoxal 5'-phosphate</name>
        <dbReference type="ChEBI" id="CHEBI:597326"/>
    </ligand>
</feature>
<feature type="binding site" evidence="1">
    <location>
        <begin position="236"/>
        <end position="237"/>
    </location>
    <ligand>
        <name>pyridoxal 5'-phosphate</name>
        <dbReference type="ChEBI" id="CHEBI:597326"/>
    </ligand>
</feature>
<feature type="modified residue" description="N6-(pyridoxal phosphate)lysine" evidence="1">
    <location>
        <position position="195"/>
    </location>
</feature>
<name>SERC_ACIB3</name>
<sequence length="359" mass="39281">MRAYNFCAGPAALPTAVLEKAQQELLDWQGKGLSIMEMSHRSADYVAVAEKAEADLRKLMNIPENYKVLFLQGGASLQFSAIPLNLLGKNNKADYIHTGIWSEKALKEAKRYGDINVVEAGIKVDGKFAISEQSEWNLSDDAAYVHYADNETIGGLQFAGVPDVKAPLVCDFSSSILSAPLDVSKFGLIYAGAQKNIGPAGLTIVIIRDDLLDQAKAEIPSILKYADQAKNGSMVNTPSTYAWYLSGLVFEWLLEQGGVDAIHKVNLEKAQLLYGYIDSSDFYNNPIAIPNRSIMNVPFTLADEALEKQFLKEAEANHLLNLAGHRSVGGMRASIYNAVPLEGVQALIRFMDDFAKRNG</sequence>
<evidence type="ECO:0000255" key="1">
    <source>
        <dbReference type="HAMAP-Rule" id="MF_00160"/>
    </source>
</evidence>
<organism>
    <name type="scientific">Acinetobacter baumannii (strain AB307-0294)</name>
    <dbReference type="NCBI Taxonomy" id="557600"/>
    <lineage>
        <taxon>Bacteria</taxon>
        <taxon>Pseudomonadati</taxon>
        <taxon>Pseudomonadota</taxon>
        <taxon>Gammaproteobacteria</taxon>
        <taxon>Moraxellales</taxon>
        <taxon>Moraxellaceae</taxon>
        <taxon>Acinetobacter</taxon>
        <taxon>Acinetobacter calcoaceticus/baumannii complex</taxon>
    </lineage>
</organism>
<keyword id="KW-0028">Amino-acid biosynthesis</keyword>
<keyword id="KW-0032">Aminotransferase</keyword>
<keyword id="KW-0963">Cytoplasm</keyword>
<keyword id="KW-0663">Pyridoxal phosphate</keyword>
<keyword id="KW-0664">Pyridoxine biosynthesis</keyword>
<keyword id="KW-0718">Serine biosynthesis</keyword>
<keyword id="KW-0808">Transferase</keyword>
<accession>B7GY87</accession>